<organism>
    <name type="scientific">Enterobacter cloacae subsp. cloacae (strain ATCC 13047 / DSM 30054 / NBRC 13535 / NCTC 10005 / WDCM 00083 / NCDC 279-56)</name>
    <dbReference type="NCBI Taxonomy" id="716541"/>
    <lineage>
        <taxon>Bacteria</taxon>
        <taxon>Pseudomonadati</taxon>
        <taxon>Pseudomonadota</taxon>
        <taxon>Gammaproteobacteria</taxon>
        <taxon>Enterobacterales</taxon>
        <taxon>Enterobacteriaceae</taxon>
        <taxon>Enterobacter</taxon>
        <taxon>Enterobacter cloacae complex</taxon>
    </lineage>
</organism>
<reference key="1">
    <citation type="journal article" date="2010" name="J. Bacteriol.">
        <title>Complete genome sequence of Enterobacter cloacae subsp. cloacae type strain ATCC 13047.</title>
        <authorList>
            <person name="Ren Y."/>
            <person name="Ren Y."/>
            <person name="Zhou Z."/>
            <person name="Guo X."/>
            <person name="Li Y."/>
            <person name="Feng L."/>
            <person name="Wang L."/>
        </authorList>
    </citation>
    <scope>NUCLEOTIDE SEQUENCE [LARGE SCALE GENOMIC DNA]</scope>
    <source>
        <strain>ATCC 13047 / DSM 30054 / NBRC 13535 / NCTC 10005 / WDCM 00083 / NCDC 279-56</strain>
    </source>
</reference>
<dbReference type="EMBL" id="CP001918">
    <property type="protein sequence ID" value="ADF62797.1"/>
    <property type="molecule type" value="Genomic_DNA"/>
</dbReference>
<dbReference type="RefSeq" id="WP_013097769.1">
    <property type="nucleotide sequence ID" value="NC_014121.1"/>
</dbReference>
<dbReference type="RefSeq" id="YP_003613746.1">
    <property type="nucleotide sequence ID" value="NC_014121.1"/>
</dbReference>
<dbReference type="SMR" id="D5CIL6"/>
<dbReference type="STRING" id="716541.ECL_03263"/>
<dbReference type="EnsemblBacteria" id="ADF62797">
    <property type="protein sequence ID" value="ADF62797"/>
    <property type="gene ID" value="ECL_03263"/>
</dbReference>
<dbReference type="KEGG" id="enc:ECL_03263"/>
<dbReference type="PATRIC" id="fig|716541.4.peg.3426"/>
<dbReference type="eggNOG" id="ENOG502ZD66">
    <property type="taxonomic scope" value="Bacteria"/>
</dbReference>
<dbReference type="HOGENOM" id="CLU_122824_0_0_6"/>
<dbReference type="OrthoDB" id="5570801at2"/>
<dbReference type="Proteomes" id="UP000002363">
    <property type="component" value="Chromosome"/>
</dbReference>
<dbReference type="GO" id="GO:0005737">
    <property type="term" value="C:cytoplasm"/>
    <property type="evidence" value="ECO:0007669"/>
    <property type="project" value="UniProtKB-SubCell"/>
</dbReference>
<dbReference type="GO" id="GO:0003677">
    <property type="term" value="F:DNA binding"/>
    <property type="evidence" value="ECO:0007669"/>
    <property type="project" value="UniProtKB-UniRule"/>
</dbReference>
<dbReference type="GO" id="GO:0008270">
    <property type="term" value="F:zinc ion binding"/>
    <property type="evidence" value="ECO:0007669"/>
    <property type="project" value="UniProtKB-UniRule"/>
</dbReference>
<dbReference type="GO" id="GO:0044781">
    <property type="term" value="P:bacterial-type flagellum organization"/>
    <property type="evidence" value="ECO:0007669"/>
    <property type="project" value="UniProtKB-KW"/>
</dbReference>
<dbReference type="GO" id="GO:0045893">
    <property type="term" value="P:positive regulation of DNA-templated transcription"/>
    <property type="evidence" value="ECO:0007669"/>
    <property type="project" value="InterPro"/>
</dbReference>
<dbReference type="GO" id="GO:1902208">
    <property type="term" value="P:regulation of bacterial-type flagellum assembly"/>
    <property type="evidence" value="ECO:0007669"/>
    <property type="project" value="UniProtKB-UniRule"/>
</dbReference>
<dbReference type="HAMAP" id="MF_01891">
    <property type="entry name" value="FhlC"/>
    <property type="match status" value="1"/>
</dbReference>
<dbReference type="InterPro" id="IPR007944">
    <property type="entry name" value="FlhC"/>
</dbReference>
<dbReference type="NCBIfam" id="NF009365">
    <property type="entry name" value="PRK12722.1"/>
    <property type="match status" value="1"/>
</dbReference>
<dbReference type="Pfam" id="PF05280">
    <property type="entry name" value="FlhC"/>
    <property type="match status" value="1"/>
</dbReference>
<dbReference type="PIRSF" id="PIRSF003159">
    <property type="entry name" value="FlhC"/>
    <property type="match status" value="1"/>
</dbReference>
<dbReference type="SUPFAM" id="SSF160930">
    <property type="entry name" value="FlhC-like"/>
    <property type="match status" value="1"/>
</dbReference>
<comment type="function">
    <text evidence="1">Functions in complex with FlhD as a master transcriptional regulator that regulates transcription of several flagellar and non-flagellar operons by binding to their promoter region. Activates expression of class 2 flagellar genes, including fliA, which is a flagellum-specific sigma factor that turns on the class 3 genes. Also regulates genes whose products function in a variety of physiological pathways.</text>
</comment>
<comment type="cofactor">
    <cofactor evidence="1">
        <name>Zn(2+)</name>
        <dbReference type="ChEBI" id="CHEBI:29105"/>
    </cofactor>
    <text evidence="1">Binds 1 zinc ion per subunit.</text>
</comment>
<comment type="subunit">
    <text evidence="1">Heterohexamer composed of two FlhC and four FlhD subunits. Each FlhC binds a FlhD dimer, forming a heterotrimer, and a hexamer assembles by dimerization of two heterotrimers.</text>
</comment>
<comment type="subcellular location">
    <subcellularLocation>
        <location evidence="1">Cytoplasm</location>
    </subcellularLocation>
</comment>
<comment type="similarity">
    <text evidence="1">Belongs to the FlhC family.</text>
</comment>
<protein>
    <recommendedName>
        <fullName evidence="1">Flagellar transcriptional regulator FlhC</fullName>
    </recommendedName>
</protein>
<evidence type="ECO:0000255" key="1">
    <source>
        <dbReference type="HAMAP-Rule" id="MF_01891"/>
    </source>
</evidence>
<feature type="chain" id="PRO_0000406760" description="Flagellar transcriptional regulator FlhC">
    <location>
        <begin position="1"/>
        <end position="191"/>
    </location>
</feature>
<feature type="binding site" evidence="1">
    <location>
        <position position="139"/>
    </location>
    <ligand>
        <name>Zn(2+)</name>
        <dbReference type="ChEBI" id="CHEBI:29105"/>
    </ligand>
</feature>
<feature type="binding site" evidence="1">
    <location>
        <position position="142"/>
    </location>
    <ligand>
        <name>Zn(2+)</name>
        <dbReference type="ChEBI" id="CHEBI:29105"/>
    </ligand>
</feature>
<feature type="binding site" evidence="1">
    <location>
        <position position="159"/>
    </location>
    <ligand>
        <name>Zn(2+)</name>
        <dbReference type="ChEBI" id="CHEBI:29105"/>
    </ligand>
</feature>
<feature type="binding site" evidence="1">
    <location>
        <position position="162"/>
    </location>
    <ligand>
        <name>Zn(2+)</name>
        <dbReference type="ChEBI" id="CHEBI:29105"/>
    </ligand>
</feature>
<gene>
    <name evidence="1" type="primary">flhC</name>
    <name type="ordered locus">ECL_03263</name>
</gene>
<proteinExistence type="inferred from homology"/>
<name>FLHC_ENTCC</name>
<accession>D5CIL6</accession>
<keyword id="KW-0010">Activator</keyword>
<keyword id="KW-1005">Bacterial flagellum biogenesis</keyword>
<keyword id="KW-0963">Cytoplasm</keyword>
<keyword id="KW-0238">DNA-binding</keyword>
<keyword id="KW-0479">Metal-binding</keyword>
<keyword id="KW-1185">Reference proteome</keyword>
<keyword id="KW-0804">Transcription</keyword>
<keyword id="KW-0805">Transcription regulation</keyword>
<keyword id="KW-0862">Zinc</keyword>
<sequence length="191" mass="21591">MCGEKSLLQEIDEVNIAMGLISLGARMQVLESETSLSRRRLLRLYKELRGCPPPKGMLPFSEDWFMSWEQNIHSSMFYNIYLYLKKTEQGRSIEMLMKTYRLYLEQCSTCSDEKPVLGLTRAWTLLRFIDCGIISRKACSVCGGGFIVTTEFIKNPFTCSLCSPPSRALKKSQVSNTGLLGTFAAPEIMTA</sequence>